<reference key="1">
    <citation type="submission" date="2007-11" db="EMBL/GenBank/DDBJ databases">
        <title>Complete genome sequence of Clostridium phytofermentans ISDg.</title>
        <authorList>
            <person name="Leschine S.B."/>
            <person name="Warnick T.A."/>
            <person name="Blanchard J.L."/>
            <person name="Schnell D.J."/>
            <person name="Petit E.L."/>
            <person name="LaTouf W.G."/>
            <person name="Copeland A."/>
            <person name="Lucas S."/>
            <person name="Lapidus A."/>
            <person name="Barry K."/>
            <person name="Glavina del Rio T."/>
            <person name="Dalin E."/>
            <person name="Tice H."/>
            <person name="Pitluck S."/>
            <person name="Kiss H."/>
            <person name="Brettin T."/>
            <person name="Bruce D."/>
            <person name="Detter J.C."/>
            <person name="Han C."/>
            <person name="Kuske C."/>
            <person name="Schmutz J."/>
            <person name="Larimer F."/>
            <person name="Land M."/>
            <person name="Hauser L."/>
            <person name="Kyrpides N."/>
            <person name="Kim E.A."/>
            <person name="Richardson P."/>
        </authorList>
    </citation>
    <scope>NUCLEOTIDE SEQUENCE [LARGE SCALE GENOMIC DNA]</scope>
    <source>
        <strain>ATCC 700394 / DSM 18823 / ISDg</strain>
    </source>
</reference>
<accession>A9KSC7</accession>
<keyword id="KW-0963">Cytoplasm</keyword>
<keyword id="KW-0413">Isomerase</keyword>
<keyword id="KW-0627">Porphyrin biosynthesis</keyword>
<keyword id="KW-0663">Pyridoxal phosphate</keyword>
<keyword id="KW-1185">Reference proteome</keyword>
<name>GSA2_LACP7</name>
<comment type="catalytic activity">
    <reaction evidence="1">
        <text>(S)-4-amino-5-oxopentanoate = 5-aminolevulinate</text>
        <dbReference type="Rhea" id="RHEA:14265"/>
        <dbReference type="ChEBI" id="CHEBI:57501"/>
        <dbReference type="ChEBI" id="CHEBI:356416"/>
        <dbReference type="EC" id="5.4.3.8"/>
    </reaction>
</comment>
<comment type="cofactor">
    <cofactor evidence="1">
        <name>pyridoxal 5'-phosphate</name>
        <dbReference type="ChEBI" id="CHEBI:597326"/>
    </cofactor>
</comment>
<comment type="pathway">
    <text evidence="1">Porphyrin-containing compound metabolism; protoporphyrin-IX biosynthesis; 5-aminolevulinate from L-glutamyl-tRNA(Glu): step 2/2.</text>
</comment>
<comment type="subunit">
    <text evidence="1">Homodimer.</text>
</comment>
<comment type="subcellular location">
    <subcellularLocation>
        <location evidence="1">Cytoplasm</location>
    </subcellularLocation>
</comment>
<comment type="similarity">
    <text evidence="1">Belongs to the class-III pyridoxal-phosphate-dependent aminotransferase family. HemL subfamily.</text>
</comment>
<gene>
    <name evidence="1" type="primary">hemL2</name>
    <name type="ordered locus">Cphy_1789</name>
</gene>
<proteinExistence type="inferred from homology"/>
<sequence>MTKSEQLFERAVKHLPGGVNSPVRAFLSVGGSPRFIESADGAYIYDVDGNKYIDYINSWGPMILGHNHEVIRTAVIEAAQKGLSYGAATEAEVEMAELLCEIVPCFEMVRMVNSGTEAVMSAIRAARGYTKRNKIIKFEGCYHGHSDGLLVKAGSGVMVAGIPDSMGVPSNCVKDTLQAKYNNLDSVIELFKQNKDEIAAIIVEPVAANMGVVLPEEGFLEGLRELCTKHGALLIFDEVITGFRLSLSGAQGYYNIIPDLATFGKIIGGGMPVGCYGGRREIMEMVAPVGPVYQAGTLSGNPVAMAAGMAQLKYLKEHPEVYTKINELGEYFRNKVNELFDKYNIKYQVSGVGSLACIFFADSRVTDYETAKLADTKEFARYFRFMLEHGIYIAPAQFEAMFFSNAHTYQDIEDTLLVIEQYLKIQ</sequence>
<organism>
    <name type="scientific">Lachnoclostridium phytofermentans (strain ATCC 700394 / DSM 18823 / ISDg)</name>
    <name type="common">Clostridium phytofermentans</name>
    <dbReference type="NCBI Taxonomy" id="357809"/>
    <lineage>
        <taxon>Bacteria</taxon>
        <taxon>Bacillati</taxon>
        <taxon>Bacillota</taxon>
        <taxon>Clostridia</taxon>
        <taxon>Lachnospirales</taxon>
        <taxon>Lachnospiraceae</taxon>
    </lineage>
</organism>
<feature type="chain" id="PRO_0000382299" description="Glutamate-1-semialdehyde 2,1-aminomutase 2">
    <location>
        <begin position="1"/>
        <end position="426"/>
    </location>
</feature>
<feature type="modified residue" description="N6-(pyridoxal phosphate)lysine" evidence="1">
    <location>
        <position position="265"/>
    </location>
</feature>
<dbReference type="EC" id="5.4.3.8" evidence="1"/>
<dbReference type="EMBL" id="CP000885">
    <property type="protein sequence ID" value="ABX42159.1"/>
    <property type="molecule type" value="Genomic_DNA"/>
</dbReference>
<dbReference type="RefSeq" id="WP_012199813.1">
    <property type="nucleotide sequence ID" value="NC_010001.1"/>
</dbReference>
<dbReference type="SMR" id="A9KSC7"/>
<dbReference type="STRING" id="357809.Cphy_1789"/>
<dbReference type="KEGG" id="cpy:Cphy_1789"/>
<dbReference type="eggNOG" id="COG0001">
    <property type="taxonomic scope" value="Bacteria"/>
</dbReference>
<dbReference type="HOGENOM" id="CLU_016922_1_5_9"/>
<dbReference type="OrthoDB" id="9807885at2"/>
<dbReference type="UniPathway" id="UPA00251">
    <property type="reaction ID" value="UER00317"/>
</dbReference>
<dbReference type="Proteomes" id="UP000000370">
    <property type="component" value="Chromosome"/>
</dbReference>
<dbReference type="GO" id="GO:0005737">
    <property type="term" value="C:cytoplasm"/>
    <property type="evidence" value="ECO:0007669"/>
    <property type="project" value="UniProtKB-SubCell"/>
</dbReference>
<dbReference type="GO" id="GO:0042286">
    <property type="term" value="F:glutamate-1-semialdehyde 2,1-aminomutase activity"/>
    <property type="evidence" value="ECO:0007669"/>
    <property type="project" value="UniProtKB-UniRule"/>
</dbReference>
<dbReference type="GO" id="GO:0030170">
    <property type="term" value="F:pyridoxal phosphate binding"/>
    <property type="evidence" value="ECO:0007669"/>
    <property type="project" value="InterPro"/>
</dbReference>
<dbReference type="GO" id="GO:0008483">
    <property type="term" value="F:transaminase activity"/>
    <property type="evidence" value="ECO:0007669"/>
    <property type="project" value="InterPro"/>
</dbReference>
<dbReference type="GO" id="GO:0006782">
    <property type="term" value="P:protoporphyrinogen IX biosynthetic process"/>
    <property type="evidence" value="ECO:0007669"/>
    <property type="project" value="UniProtKB-UniRule"/>
</dbReference>
<dbReference type="CDD" id="cd00610">
    <property type="entry name" value="OAT_like"/>
    <property type="match status" value="1"/>
</dbReference>
<dbReference type="FunFam" id="3.40.640.10:FF:000021">
    <property type="entry name" value="Glutamate-1-semialdehyde 2,1-aminomutase"/>
    <property type="match status" value="1"/>
</dbReference>
<dbReference type="Gene3D" id="3.90.1150.10">
    <property type="entry name" value="Aspartate Aminotransferase, domain 1"/>
    <property type="match status" value="1"/>
</dbReference>
<dbReference type="Gene3D" id="3.40.640.10">
    <property type="entry name" value="Type I PLP-dependent aspartate aminotransferase-like (Major domain)"/>
    <property type="match status" value="1"/>
</dbReference>
<dbReference type="HAMAP" id="MF_00375">
    <property type="entry name" value="HemL_aminotrans_3"/>
    <property type="match status" value="1"/>
</dbReference>
<dbReference type="InterPro" id="IPR004639">
    <property type="entry name" value="4pyrrol_synth_GluAld_NH2Trfase"/>
</dbReference>
<dbReference type="InterPro" id="IPR005814">
    <property type="entry name" value="Aminotrans_3"/>
</dbReference>
<dbReference type="InterPro" id="IPR049704">
    <property type="entry name" value="Aminotrans_3_PPA_site"/>
</dbReference>
<dbReference type="InterPro" id="IPR015424">
    <property type="entry name" value="PyrdxlP-dep_Trfase"/>
</dbReference>
<dbReference type="InterPro" id="IPR015421">
    <property type="entry name" value="PyrdxlP-dep_Trfase_major"/>
</dbReference>
<dbReference type="InterPro" id="IPR015422">
    <property type="entry name" value="PyrdxlP-dep_Trfase_small"/>
</dbReference>
<dbReference type="NCBIfam" id="TIGR00713">
    <property type="entry name" value="hemL"/>
    <property type="match status" value="1"/>
</dbReference>
<dbReference type="NCBIfam" id="NF000818">
    <property type="entry name" value="PRK00062.1"/>
    <property type="match status" value="1"/>
</dbReference>
<dbReference type="PANTHER" id="PTHR43713">
    <property type="entry name" value="GLUTAMATE-1-SEMIALDEHYDE 2,1-AMINOMUTASE"/>
    <property type="match status" value="1"/>
</dbReference>
<dbReference type="PANTHER" id="PTHR43713:SF3">
    <property type="entry name" value="GLUTAMATE-1-SEMIALDEHYDE 2,1-AMINOMUTASE 1, CHLOROPLASTIC-RELATED"/>
    <property type="match status" value="1"/>
</dbReference>
<dbReference type="Pfam" id="PF00202">
    <property type="entry name" value="Aminotran_3"/>
    <property type="match status" value="1"/>
</dbReference>
<dbReference type="SUPFAM" id="SSF53383">
    <property type="entry name" value="PLP-dependent transferases"/>
    <property type="match status" value="1"/>
</dbReference>
<dbReference type="PROSITE" id="PS00600">
    <property type="entry name" value="AA_TRANSFER_CLASS_3"/>
    <property type="match status" value="1"/>
</dbReference>
<protein>
    <recommendedName>
        <fullName evidence="1">Glutamate-1-semialdehyde 2,1-aminomutase 2</fullName>
        <shortName evidence="1">GSA 2</shortName>
        <ecNumber evidence="1">5.4.3.8</ecNumber>
    </recommendedName>
    <alternativeName>
        <fullName evidence="1">Glutamate-1-semialdehyde aminotransferase 2</fullName>
        <shortName evidence="1">GSA-AT 2</shortName>
    </alternativeName>
</protein>
<evidence type="ECO:0000255" key="1">
    <source>
        <dbReference type="HAMAP-Rule" id="MF_00375"/>
    </source>
</evidence>